<comment type="function">
    <text evidence="1">Catalyzes the isomerization between 2-isopropylmalate and 3-isopropylmalate, via the formation of 2-isopropylmaleate.</text>
</comment>
<comment type="catalytic activity">
    <reaction evidence="1">
        <text>(2R,3S)-3-isopropylmalate = (2S)-2-isopropylmalate</text>
        <dbReference type="Rhea" id="RHEA:32287"/>
        <dbReference type="ChEBI" id="CHEBI:1178"/>
        <dbReference type="ChEBI" id="CHEBI:35121"/>
        <dbReference type="EC" id="4.2.1.33"/>
    </reaction>
</comment>
<comment type="cofactor">
    <cofactor evidence="1">
        <name>[4Fe-4S] cluster</name>
        <dbReference type="ChEBI" id="CHEBI:49883"/>
    </cofactor>
    <text evidence="1">Binds 1 [4Fe-4S] cluster per subunit.</text>
</comment>
<comment type="pathway">
    <text evidence="1">Amino-acid biosynthesis; L-leucine biosynthesis; L-leucine from 3-methyl-2-oxobutanoate: step 2/4.</text>
</comment>
<comment type="subunit">
    <text evidence="1">Heterodimer of LeuC and LeuD.</text>
</comment>
<comment type="similarity">
    <text evidence="1">Belongs to the aconitase/IPM isomerase family. LeuC type 1 subfamily.</text>
</comment>
<organism>
    <name type="scientific">Nitrosococcus oceani (strain ATCC 19707 / BCRC 17464 / JCM 30415 / NCIMB 11848 / C-107)</name>
    <dbReference type="NCBI Taxonomy" id="323261"/>
    <lineage>
        <taxon>Bacteria</taxon>
        <taxon>Pseudomonadati</taxon>
        <taxon>Pseudomonadota</taxon>
        <taxon>Gammaproteobacteria</taxon>
        <taxon>Chromatiales</taxon>
        <taxon>Chromatiaceae</taxon>
        <taxon>Nitrosococcus</taxon>
    </lineage>
</organism>
<gene>
    <name evidence="1" type="primary">leuC</name>
    <name type="ordered locus">Noc_2935</name>
</gene>
<sequence length="469" mass="50332">MAGKTLYDKLWNSHVVRTNPGGTALLYIDRHLVHEVTSPQAFEGLRLAGRKPWRKGANLAVPDHNVPTTDRSQGIQDPISRIQVEALDRNCQELGLTEFRMDDPRQGIVHIVGPEQGATLPGMTVVCGDSHTATHGAFGALAFGIGTSEVEHVLATQCLLQKKSKNMLIQVSGKLAPGVYSKDLILAIIARIGTAGGTGYTIEFAGETIRALSMEGRMTLCNMAIEAGARAGLVAVDETTIDYLKGRPFAPSPHSWGQAVNAWQMLQSDPDASFDRVVTIDAAALKPQVSWGTSPEMVASIDGRVPDPRQESDPTKRGGMERALEYMGLAANTPISEIRPDIIFIGSCTNARIEDLREAAKVVAGHKVAGNIKQALVVPGSGLVKRQAETEGLDQIFKEAGFEWREPGCSMCLAMNADRLEPEERCASTSNRNFEGRQGQGGRTHLVSPAMAAAAAVAGHFTDVSTLNH</sequence>
<protein>
    <recommendedName>
        <fullName evidence="1">3-isopropylmalate dehydratase large subunit</fullName>
        <ecNumber evidence="1">4.2.1.33</ecNumber>
    </recommendedName>
    <alternativeName>
        <fullName evidence="1">Alpha-IPM isomerase</fullName>
        <shortName evidence="1">IPMI</shortName>
    </alternativeName>
    <alternativeName>
        <fullName evidence="1">Isopropylmalate isomerase</fullName>
    </alternativeName>
</protein>
<reference key="1">
    <citation type="journal article" date="2006" name="Appl. Environ. Microbiol.">
        <title>Complete genome sequence of the marine, chemolithoautotrophic, ammonia-oxidizing bacterium Nitrosococcus oceani ATCC 19707.</title>
        <authorList>
            <person name="Klotz M.G."/>
            <person name="Arp D.J."/>
            <person name="Chain P.S.G."/>
            <person name="El-Sheikh A.F."/>
            <person name="Hauser L.J."/>
            <person name="Hommes N.G."/>
            <person name="Larimer F.W."/>
            <person name="Malfatti S.A."/>
            <person name="Norton J.M."/>
            <person name="Poret-Peterson A.T."/>
            <person name="Vergez L.M."/>
            <person name="Ward B.B."/>
        </authorList>
    </citation>
    <scope>NUCLEOTIDE SEQUENCE [LARGE SCALE GENOMIC DNA]</scope>
    <source>
        <strain>ATCC 19707 / BCRC 17464 / JCM 30415 / NCIMB 11848 / C-107</strain>
    </source>
</reference>
<keyword id="KW-0004">4Fe-4S</keyword>
<keyword id="KW-0028">Amino-acid biosynthesis</keyword>
<keyword id="KW-0100">Branched-chain amino acid biosynthesis</keyword>
<keyword id="KW-0408">Iron</keyword>
<keyword id="KW-0411">Iron-sulfur</keyword>
<keyword id="KW-0432">Leucine biosynthesis</keyword>
<keyword id="KW-0456">Lyase</keyword>
<keyword id="KW-0479">Metal-binding</keyword>
<keyword id="KW-1185">Reference proteome</keyword>
<name>LEUC_NITOC</name>
<feature type="chain" id="PRO_0000076771" description="3-isopropylmalate dehydratase large subunit">
    <location>
        <begin position="1"/>
        <end position="469"/>
    </location>
</feature>
<feature type="binding site" evidence="1">
    <location>
        <position position="348"/>
    </location>
    <ligand>
        <name>[4Fe-4S] cluster</name>
        <dbReference type="ChEBI" id="CHEBI:49883"/>
    </ligand>
</feature>
<feature type="binding site" evidence="1">
    <location>
        <position position="409"/>
    </location>
    <ligand>
        <name>[4Fe-4S] cluster</name>
        <dbReference type="ChEBI" id="CHEBI:49883"/>
    </ligand>
</feature>
<feature type="binding site" evidence="1">
    <location>
        <position position="412"/>
    </location>
    <ligand>
        <name>[4Fe-4S] cluster</name>
        <dbReference type="ChEBI" id="CHEBI:49883"/>
    </ligand>
</feature>
<evidence type="ECO:0000255" key="1">
    <source>
        <dbReference type="HAMAP-Rule" id="MF_01026"/>
    </source>
</evidence>
<dbReference type="EC" id="4.2.1.33" evidence="1"/>
<dbReference type="EMBL" id="CP000127">
    <property type="protein sequence ID" value="ABA59380.1"/>
    <property type="molecule type" value="Genomic_DNA"/>
</dbReference>
<dbReference type="RefSeq" id="WP_002813320.1">
    <property type="nucleotide sequence ID" value="NC_007484.1"/>
</dbReference>
<dbReference type="SMR" id="Q3J716"/>
<dbReference type="FunCoup" id="Q3J716">
    <property type="interactions" value="518"/>
</dbReference>
<dbReference type="STRING" id="323261.Noc_2935"/>
<dbReference type="KEGG" id="noc:Noc_2935"/>
<dbReference type="eggNOG" id="COG0065">
    <property type="taxonomic scope" value="Bacteria"/>
</dbReference>
<dbReference type="HOGENOM" id="CLU_006714_3_4_6"/>
<dbReference type="InParanoid" id="Q3J716"/>
<dbReference type="UniPathway" id="UPA00048">
    <property type="reaction ID" value="UER00071"/>
</dbReference>
<dbReference type="Proteomes" id="UP000006838">
    <property type="component" value="Chromosome"/>
</dbReference>
<dbReference type="GO" id="GO:0003861">
    <property type="term" value="F:3-isopropylmalate dehydratase activity"/>
    <property type="evidence" value="ECO:0007669"/>
    <property type="project" value="UniProtKB-UniRule"/>
</dbReference>
<dbReference type="GO" id="GO:0051539">
    <property type="term" value="F:4 iron, 4 sulfur cluster binding"/>
    <property type="evidence" value="ECO:0007669"/>
    <property type="project" value="UniProtKB-KW"/>
</dbReference>
<dbReference type="GO" id="GO:0046872">
    <property type="term" value="F:metal ion binding"/>
    <property type="evidence" value="ECO:0007669"/>
    <property type="project" value="UniProtKB-KW"/>
</dbReference>
<dbReference type="GO" id="GO:0009098">
    <property type="term" value="P:L-leucine biosynthetic process"/>
    <property type="evidence" value="ECO:0007669"/>
    <property type="project" value="UniProtKB-UniRule"/>
</dbReference>
<dbReference type="CDD" id="cd01583">
    <property type="entry name" value="IPMI"/>
    <property type="match status" value="1"/>
</dbReference>
<dbReference type="FunFam" id="3.30.499.10:FF:000007">
    <property type="entry name" value="3-isopropylmalate dehydratase large subunit"/>
    <property type="match status" value="1"/>
</dbReference>
<dbReference type="Gene3D" id="3.30.499.10">
    <property type="entry name" value="Aconitase, domain 3"/>
    <property type="match status" value="2"/>
</dbReference>
<dbReference type="HAMAP" id="MF_01026">
    <property type="entry name" value="LeuC_type1"/>
    <property type="match status" value="1"/>
</dbReference>
<dbReference type="InterPro" id="IPR004430">
    <property type="entry name" value="3-IsopropMal_deHydase_lsu"/>
</dbReference>
<dbReference type="InterPro" id="IPR015931">
    <property type="entry name" value="Acnase/IPM_dHydase_lsu_aba_1/3"/>
</dbReference>
<dbReference type="InterPro" id="IPR001030">
    <property type="entry name" value="Acoase/IPM_deHydtase_lsu_aba"/>
</dbReference>
<dbReference type="InterPro" id="IPR018136">
    <property type="entry name" value="Aconitase_4Fe-4S_BS"/>
</dbReference>
<dbReference type="InterPro" id="IPR036008">
    <property type="entry name" value="Aconitase_4Fe-4S_dom"/>
</dbReference>
<dbReference type="InterPro" id="IPR050067">
    <property type="entry name" value="IPM_dehydratase_rel_enz"/>
</dbReference>
<dbReference type="InterPro" id="IPR033941">
    <property type="entry name" value="IPMI_cat"/>
</dbReference>
<dbReference type="NCBIfam" id="TIGR00170">
    <property type="entry name" value="leuC"/>
    <property type="match status" value="1"/>
</dbReference>
<dbReference type="NCBIfam" id="NF004016">
    <property type="entry name" value="PRK05478.1"/>
    <property type="match status" value="1"/>
</dbReference>
<dbReference type="NCBIfam" id="NF009116">
    <property type="entry name" value="PRK12466.1"/>
    <property type="match status" value="1"/>
</dbReference>
<dbReference type="PANTHER" id="PTHR43822:SF9">
    <property type="entry name" value="3-ISOPROPYLMALATE DEHYDRATASE"/>
    <property type="match status" value="1"/>
</dbReference>
<dbReference type="PANTHER" id="PTHR43822">
    <property type="entry name" value="HOMOACONITASE, MITOCHONDRIAL-RELATED"/>
    <property type="match status" value="1"/>
</dbReference>
<dbReference type="Pfam" id="PF00330">
    <property type="entry name" value="Aconitase"/>
    <property type="match status" value="1"/>
</dbReference>
<dbReference type="PRINTS" id="PR00415">
    <property type="entry name" value="ACONITASE"/>
</dbReference>
<dbReference type="SUPFAM" id="SSF53732">
    <property type="entry name" value="Aconitase iron-sulfur domain"/>
    <property type="match status" value="1"/>
</dbReference>
<dbReference type="PROSITE" id="PS01244">
    <property type="entry name" value="ACONITASE_2"/>
    <property type="match status" value="1"/>
</dbReference>
<accession>Q3J716</accession>
<proteinExistence type="inferred from homology"/>